<sequence length="305" mass="34202">MIYSHLSSTSCTITTGCKVNLNLYITGILPNGWHKIDSIFLPLSEPHDELHIEITNHNQGLHLSCNILDIELENNILTKTYTLFTKATHFTPSISIYLKKGIPYGAGLGGGSSDAAALLTWLQKNSPLPLSPSKLLKLAAEIGADVPFFLKNKPCRATGIGEKLEEISLSNLNISGNTLFIICPNLKISTPYAYKMWDDYNKKQIATSSRYNNNLTKKYSWDRSSPSTHLSDYLWMKNDFEPVIFSEYTELSVFKEQLLQFGARAAVLSGSGSSIYGLFKEYNQTSIMTEFYKKKNILTFSQLLQ</sequence>
<feature type="chain" id="PRO_0000335722" description="4-diphosphocytidyl-2-C-methyl-D-erythritol kinase">
    <location>
        <begin position="1"/>
        <end position="305"/>
    </location>
</feature>
<feature type="active site" evidence="1">
    <location>
        <position position="18"/>
    </location>
</feature>
<feature type="active site" evidence="1">
    <location>
        <position position="145"/>
    </location>
</feature>
<feature type="binding site" evidence="1">
    <location>
        <begin position="103"/>
        <end position="113"/>
    </location>
    <ligand>
        <name>ATP</name>
        <dbReference type="ChEBI" id="CHEBI:30616"/>
    </ligand>
</feature>
<evidence type="ECO:0000255" key="1">
    <source>
        <dbReference type="HAMAP-Rule" id="MF_00061"/>
    </source>
</evidence>
<dbReference type="EC" id="2.7.1.148" evidence="1"/>
<dbReference type="EMBL" id="AM180252">
    <property type="protein sequence ID" value="CAJ54789.1"/>
    <property type="molecule type" value="Genomic_DNA"/>
</dbReference>
<dbReference type="RefSeq" id="WP_011526818.1">
    <property type="nucleotide sequence ID" value="NC_008011.1"/>
</dbReference>
<dbReference type="SMR" id="Q1MQD8"/>
<dbReference type="STRING" id="363253.LI0735"/>
<dbReference type="KEGG" id="lip:LI0735"/>
<dbReference type="eggNOG" id="COG1947">
    <property type="taxonomic scope" value="Bacteria"/>
</dbReference>
<dbReference type="HOGENOM" id="CLU_053057_1_1_7"/>
<dbReference type="OrthoDB" id="9809438at2"/>
<dbReference type="UniPathway" id="UPA00056">
    <property type="reaction ID" value="UER00094"/>
</dbReference>
<dbReference type="Proteomes" id="UP000002430">
    <property type="component" value="Chromosome"/>
</dbReference>
<dbReference type="GO" id="GO:0050515">
    <property type="term" value="F:4-(cytidine 5'-diphospho)-2-C-methyl-D-erythritol kinase activity"/>
    <property type="evidence" value="ECO:0007669"/>
    <property type="project" value="UniProtKB-UniRule"/>
</dbReference>
<dbReference type="GO" id="GO:0005524">
    <property type="term" value="F:ATP binding"/>
    <property type="evidence" value="ECO:0007669"/>
    <property type="project" value="UniProtKB-UniRule"/>
</dbReference>
<dbReference type="GO" id="GO:0019288">
    <property type="term" value="P:isopentenyl diphosphate biosynthetic process, methylerythritol 4-phosphate pathway"/>
    <property type="evidence" value="ECO:0007669"/>
    <property type="project" value="UniProtKB-UniRule"/>
</dbReference>
<dbReference type="GO" id="GO:0016114">
    <property type="term" value="P:terpenoid biosynthetic process"/>
    <property type="evidence" value="ECO:0007669"/>
    <property type="project" value="InterPro"/>
</dbReference>
<dbReference type="Gene3D" id="3.30.230.10">
    <property type="match status" value="1"/>
</dbReference>
<dbReference type="Gene3D" id="3.30.70.890">
    <property type="entry name" value="GHMP kinase, C-terminal domain"/>
    <property type="match status" value="1"/>
</dbReference>
<dbReference type="HAMAP" id="MF_00061">
    <property type="entry name" value="IspE"/>
    <property type="match status" value="1"/>
</dbReference>
<dbReference type="InterPro" id="IPR013750">
    <property type="entry name" value="GHMP_kinase_C_dom"/>
</dbReference>
<dbReference type="InterPro" id="IPR036554">
    <property type="entry name" value="GHMP_kinase_C_sf"/>
</dbReference>
<dbReference type="InterPro" id="IPR006204">
    <property type="entry name" value="GHMP_kinase_N_dom"/>
</dbReference>
<dbReference type="InterPro" id="IPR004424">
    <property type="entry name" value="IspE"/>
</dbReference>
<dbReference type="InterPro" id="IPR020568">
    <property type="entry name" value="Ribosomal_Su5_D2-typ_SF"/>
</dbReference>
<dbReference type="InterPro" id="IPR014721">
    <property type="entry name" value="Ribsml_uS5_D2-typ_fold_subgr"/>
</dbReference>
<dbReference type="NCBIfam" id="TIGR00154">
    <property type="entry name" value="ispE"/>
    <property type="match status" value="1"/>
</dbReference>
<dbReference type="PANTHER" id="PTHR43527">
    <property type="entry name" value="4-DIPHOSPHOCYTIDYL-2-C-METHYL-D-ERYTHRITOL KINASE, CHLOROPLASTIC"/>
    <property type="match status" value="1"/>
</dbReference>
<dbReference type="PANTHER" id="PTHR43527:SF2">
    <property type="entry name" value="4-DIPHOSPHOCYTIDYL-2-C-METHYL-D-ERYTHRITOL KINASE, CHLOROPLASTIC"/>
    <property type="match status" value="1"/>
</dbReference>
<dbReference type="Pfam" id="PF08544">
    <property type="entry name" value="GHMP_kinases_C"/>
    <property type="match status" value="1"/>
</dbReference>
<dbReference type="Pfam" id="PF00288">
    <property type="entry name" value="GHMP_kinases_N"/>
    <property type="match status" value="1"/>
</dbReference>
<dbReference type="PIRSF" id="PIRSF010376">
    <property type="entry name" value="IspE"/>
    <property type="match status" value="1"/>
</dbReference>
<dbReference type="SUPFAM" id="SSF55060">
    <property type="entry name" value="GHMP Kinase, C-terminal domain"/>
    <property type="match status" value="1"/>
</dbReference>
<dbReference type="SUPFAM" id="SSF54211">
    <property type="entry name" value="Ribosomal protein S5 domain 2-like"/>
    <property type="match status" value="1"/>
</dbReference>
<comment type="function">
    <text evidence="1">Catalyzes the phosphorylation of the position 2 hydroxy group of 4-diphosphocytidyl-2C-methyl-D-erythritol.</text>
</comment>
<comment type="catalytic activity">
    <reaction evidence="1">
        <text>4-CDP-2-C-methyl-D-erythritol + ATP = 4-CDP-2-C-methyl-D-erythritol 2-phosphate + ADP + H(+)</text>
        <dbReference type="Rhea" id="RHEA:18437"/>
        <dbReference type="ChEBI" id="CHEBI:15378"/>
        <dbReference type="ChEBI" id="CHEBI:30616"/>
        <dbReference type="ChEBI" id="CHEBI:57823"/>
        <dbReference type="ChEBI" id="CHEBI:57919"/>
        <dbReference type="ChEBI" id="CHEBI:456216"/>
        <dbReference type="EC" id="2.7.1.148"/>
    </reaction>
</comment>
<comment type="pathway">
    <text evidence="1">Isoprenoid biosynthesis; isopentenyl diphosphate biosynthesis via DXP pathway; isopentenyl diphosphate from 1-deoxy-D-xylulose 5-phosphate: step 3/6.</text>
</comment>
<comment type="similarity">
    <text evidence="1">Belongs to the GHMP kinase family. IspE subfamily.</text>
</comment>
<accession>Q1MQD8</accession>
<gene>
    <name evidence="1" type="primary">ispE</name>
    <name type="ordered locus">LI0735</name>
</gene>
<keyword id="KW-0067">ATP-binding</keyword>
<keyword id="KW-0414">Isoprene biosynthesis</keyword>
<keyword id="KW-0418">Kinase</keyword>
<keyword id="KW-0547">Nucleotide-binding</keyword>
<keyword id="KW-1185">Reference proteome</keyword>
<keyword id="KW-0808">Transferase</keyword>
<proteinExistence type="inferred from homology"/>
<organism>
    <name type="scientific">Lawsonia intracellularis (strain PHE/MN1-00)</name>
    <dbReference type="NCBI Taxonomy" id="363253"/>
    <lineage>
        <taxon>Bacteria</taxon>
        <taxon>Pseudomonadati</taxon>
        <taxon>Thermodesulfobacteriota</taxon>
        <taxon>Desulfovibrionia</taxon>
        <taxon>Desulfovibrionales</taxon>
        <taxon>Desulfovibrionaceae</taxon>
        <taxon>Lawsonia</taxon>
    </lineage>
</organism>
<protein>
    <recommendedName>
        <fullName evidence="1">4-diphosphocytidyl-2-C-methyl-D-erythritol kinase</fullName>
        <shortName evidence="1">CMK</shortName>
        <ecNumber evidence="1">2.7.1.148</ecNumber>
    </recommendedName>
    <alternativeName>
        <fullName evidence="1">4-(cytidine-5'-diphospho)-2-C-methyl-D-erythritol kinase</fullName>
    </alternativeName>
</protein>
<name>ISPE_LAWIP</name>
<reference key="1">
    <citation type="submission" date="2005-11" db="EMBL/GenBank/DDBJ databases">
        <title>The complete genome sequence of Lawsonia intracellularis: the causative agent of proliferative enteropathy.</title>
        <authorList>
            <person name="Kaur K."/>
            <person name="Zhang Q."/>
            <person name="Beckler D."/>
            <person name="Munir S."/>
            <person name="Li L."/>
            <person name="Kinsley K."/>
            <person name="Herron L."/>
            <person name="Peterson A."/>
            <person name="May B."/>
            <person name="Singh S."/>
            <person name="Gebhart C."/>
            <person name="Kapur V."/>
        </authorList>
    </citation>
    <scope>NUCLEOTIDE SEQUENCE [LARGE SCALE GENOMIC DNA]</scope>
    <source>
        <strain>PHE/MN1-00</strain>
    </source>
</reference>